<accession>O35680</accession>
<organism>
    <name type="scientific">Mus musculus</name>
    <name type="common">Mouse</name>
    <dbReference type="NCBI Taxonomy" id="10090"/>
    <lineage>
        <taxon>Eukaryota</taxon>
        <taxon>Metazoa</taxon>
        <taxon>Chordata</taxon>
        <taxon>Craniata</taxon>
        <taxon>Vertebrata</taxon>
        <taxon>Euteleostomi</taxon>
        <taxon>Mammalia</taxon>
        <taxon>Eutheria</taxon>
        <taxon>Euarchontoglires</taxon>
        <taxon>Glires</taxon>
        <taxon>Rodentia</taxon>
        <taxon>Myomorpha</taxon>
        <taxon>Muroidea</taxon>
        <taxon>Muridae</taxon>
        <taxon>Murinae</taxon>
        <taxon>Mus</taxon>
        <taxon>Mus</taxon>
    </lineage>
</organism>
<feature type="transit peptide" description="Mitochondrion" evidence="2">
    <location>
        <begin position="1"/>
        <end position="29"/>
    </location>
</feature>
<feature type="chain" id="PRO_0000030607" description="Small ribosomal subunit protein uS12m">
    <location>
        <begin position="30"/>
        <end position="139"/>
    </location>
</feature>
<keyword id="KW-0002">3D-structure</keyword>
<keyword id="KW-0496">Mitochondrion</keyword>
<keyword id="KW-1185">Reference proteome</keyword>
<keyword id="KW-0687">Ribonucleoprotein</keyword>
<keyword id="KW-0689">Ribosomal protein</keyword>
<keyword id="KW-0809">Transit peptide</keyword>
<dbReference type="EMBL" id="Y11682">
    <property type="protein sequence ID" value="CAA72378.1"/>
    <property type="molecule type" value="mRNA"/>
</dbReference>
<dbReference type="EMBL" id="BC012679">
    <property type="protein sequence ID" value="AAH12679.1"/>
    <property type="molecule type" value="mRNA"/>
</dbReference>
<dbReference type="EMBL" id="BC027522">
    <property type="protein sequence ID" value="AAH27522.1"/>
    <property type="molecule type" value="mRNA"/>
</dbReference>
<dbReference type="CCDS" id="CCDS21052.1"/>
<dbReference type="RefSeq" id="NP_001347179.1">
    <property type="nucleotide sequence ID" value="NM_001360250.1"/>
</dbReference>
<dbReference type="RefSeq" id="NP_001347181.1">
    <property type="nucleotide sequence ID" value="NM_001360252.1"/>
</dbReference>
<dbReference type="RefSeq" id="NP_036015.1">
    <property type="nucleotide sequence ID" value="NM_011885.5"/>
</dbReference>
<dbReference type="RefSeq" id="XP_006539971.1">
    <property type="nucleotide sequence ID" value="XM_006539908.2"/>
</dbReference>
<dbReference type="PDB" id="7PNT">
    <property type="method" value="EM"/>
    <property type="resolution" value="3.19 A"/>
    <property type="chains" value="J=1-139"/>
</dbReference>
<dbReference type="PDB" id="7PNU">
    <property type="method" value="EM"/>
    <property type="resolution" value="3.06 A"/>
    <property type="chains" value="J=1-139"/>
</dbReference>
<dbReference type="PDB" id="7PNV">
    <property type="method" value="EM"/>
    <property type="resolution" value="3.06 A"/>
    <property type="chains" value="J=1-139"/>
</dbReference>
<dbReference type="PDB" id="7PNW">
    <property type="method" value="EM"/>
    <property type="resolution" value="3.09 A"/>
    <property type="chains" value="J=1-139"/>
</dbReference>
<dbReference type="PDBsum" id="7PNT"/>
<dbReference type="PDBsum" id="7PNU"/>
<dbReference type="PDBsum" id="7PNV"/>
<dbReference type="PDBsum" id="7PNW"/>
<dbReference type="EMDB" id="EMD-13551"/>
<dbReference type="EMDB" id="EMD-13552"/>
<dbReference type="EMDB" id="EMD-13553"/>
<dbReference type="EMDB" id="EMD-13554"/>
<dbReference type="SMR" id="O35680"/>
<dbReference type="BioGRID" id="204858">
    <property type="interactions" value="22"/>
</dbReference>
<dbReference type="ComplexPortal" id="CPX-5301">
    <property type="entry name" value="28S mitochondrial small ribosomal subunit"/>
</dbReference>
<dbReference type="FunCoup" id="O35680">
    <property type="interactions" value="1209"/>
</dbReference>
<dbReference type="IntAct" id="O35680">
    <property type="interactions" value="1"/>
</dbReference>
<dbReference type="MINT" id="O35680"/>
<dbReference type="STRING" id="10090.ENSMUSP00000132443"/>
<dbReference type="GlyGen" id="O35680">
    <property type="glycosylation" value="1 site"/>
</dbReference>
<dbReference type="iPTMnet" id="O35680"/>
<dbReference type="PhosphoSitePlus" id="O35680"/>
<dbReference type="PaxDb" id="10090-ENSMUSP00000062066"/>
<dbReference type="PeptideAtlas" id="O35680"/>
<dbReference type="ProteomicsDB" id="256634"/>
<dbReference type="Pumba" id="O35680"/>
<dbReference type="Antibodypedia" id="30241">
    <property type="antibodies" value="181 antibodies from 26 providers"/>
</dbReference>
<dbReference type="DNASU" id="24030"/>
<dbReference type="Ensembl" id="ENSMUST00000056078.9">
    <property type="protein sequence ID" value="ENSMUSP00000062066.9"/>
    <property type="gene ID" value="ENSMUSG00000045948.9"/>
</dbReference>
<dbReference type="Ensembl" id="ENSMUST00000171183.2">
    <property type="protein sequence ID" value="ENSMUSP00000132443.2"/>
    <property type="gene ID" value="ENSMUSG00000045948.9"/>
</dbReference>
<dbReference type="GeneID" id="24030"/>
<dbReference type="KEGG" id="mmu:24030"/>
<dbReference type="UCSC" id="uc009fzo.1">
    <property type="organism name" value="mouse"/>
</dbReference>
<dbReference type="AGR" id="MGI:1346333"/>
<dbReference type="CTD" id="6183"/>
<dbReference type="MGI" id="MGI:1346333">
    <property type="gene designation" value="Mrps12"/>
</dbReference>
<dbReference type="VEuPathDB" id="HostDB:ENSMUSG00000045948"/>
<dbReference type="eggNOG" id="KOG1750">
    <property type="taxonomic scope" value="Eukaryota"/>
</dbReference>
<dbReference type="GeneTree" id="ENSGT00550000075103"/>
<dbReference type="HOGENOM" id="CLU_104295_3_1_1"/>
<dbReference type="InParanoid" id="O35680"/>
<dbReference type="OMA" id="MHRQGPP"/>
<dbReference type="OrthoDB" id="361013at2759"/>
<dbReference type="PhylomeDB" id="O35680"/>
<dbReference type="TreeFam" id="TF315095"/>
<dbReference type="Reactome" id="R-MMU-5389840">
    <property type="pathway name" value="Mitochondrial translation elongation"/>
</dbReference>
<dbReference type="Reactome" id="R-MMU-5419276">
    <property type="pathway name" value="Mitochondrial translation termination"/>
</dbReference>
<dbReference type="BioGRID-ORCS" id="24030">
    <property type="hits" value="23 hits in 78 CRISPR screens"/>
</dbReference>
<dbReference type="ChiTaRS" id="Mrps12">
    <property type="organism name" value="mouse"/>
</dbReference>
<dbReference type="PRO" id="PR:O35680"/>
<dbReference type="Proteomes" id="UP000000589">
    <property type="component" value="Chromosome 7"/>
</dbReference>
<dbReference type="RNAct" id="O35680">
    <property type="molecule type" value="protein"/>
</dbReference>
<dbReference type="Bgee" id="ENSMUSG00000045948">
    <property type="expression patterns" value="Expressed in epiblast cell in embryo and 263 other cell types or tissues"/>
</dbReference>
<dbReference type="ExpressionAtlas" id="O35680">
    <property type="expression patterns" value="baseline and differential"/>
</dbReference>
<dbReference type="GO" id="GO:0005743">
    <property type="term" value="C:mitochondrial inner membrane"/>
    <property type="evidence" value="ECO:0000303"/>
    <property type="project" value="ComplexPortal"/>
</dbReference>
<dbReference type="GO" id="GO:0005763">
    <property type="term" value="C:mitochondrial small ribosomal subunit"/>
    <property type="evidence" value="ECO:0000250"/>
    <property type="project" value="UniProtKB"/>
</dbReference>
<dbReference type="GO" id="GO:0005739">
    <property type="term" value="C:mitochondrion"/>
    <property type="evidence" value="ECO:0007005"/>
    <property type="project" value="MGI"/>
</dbReference>
<dbReference type="GO" id="GO:0003735">
    <property type="term" value="F:structural constituent of ribosome"/>
    <property type="evidence" value="ECO:0000250"/>
    <property type="project" value="UniProtKB"/>
</dbReference>
<dbReference type="GO" id="GO:0032543">
    <property type="term" value="P:mitochondrial translation"/>
    <property type="evidence" value="ECO:0000250"/>
    <property type="project" value="UniProtKB"/>
</dbReference>
<dbReference type="CDD" id="cd03368">
    <property type="entry name" value="Ribosomal_S12"/>
    <property type="match status" value="1"/>
</dbReference>
<dbReference type="FunFam" id="2.40.50.140:FF:000115">
    <property type="entry name" value="28S ribosomal protein S12, mitochondrial"/>
    <property type="match status" value="1"/>
</dbReference>
<dbReference type="Gene3D" id="2.40.50.140">
    <property type="entry name" value="Nucleic acid-binding proteins"/>
    <property type="match status" value="1"/>
</dbReference>
<dbReference type="InterPro" id="IPR012340">
    <property type="entry name" value="NA-bd_OB-fold"/>
</dbReference>
<dbReference type="InterPro" id="IPR006032">
    <property type="entry name" value="Ribosomal_uS12"/>
</dbReference>
<dbReference type="InterPro" id="IPR005679">
    <property type="entry name" value="Ribosomal_uS12_bac"/>
</dbReference>
<dbReference type="NCBIfam" id="TIGR00981">
    <property type="entry name" value="rpsL_bact"/>
    <property type="match status" value="1"/>
</dbReference>
<dbReference type="PANTHER" id="PTHR11652">
    <property type="entry name" value="30S RIBOSOMAL PROTEIN S12 FAMILY MEMBER"/>
    <property type="match status" value="1"/>
</dbReference>
<dbReference type="Pfam" id="PF00164">
    <property type="entry name" value="Ribosom_S12_S23"/>
    <property type="match status" value="1"/>
</dbReference>
<dbReference type="PRINTS" id="PR01034">
    <property type="entry name" value="RIBOSOMALS12"/>
</dbReference>
<dbReference type="SUPFAM" id="SSF50249">
    <property type="entry name" value="Nucleic acid-binding proteins"/>
    <property type="match status" value="1"/>
</dbReference>
<dbReference type="PROSITE" id="PS00055">
    <property type="entry name" value="RIBOSOMAL_S12"/>
    <property type="match status" value="1"/>
</dbReference>
<comment type="subunit">
    <text evidence="1">Component of the mitochondrial ribosome small subunit (28S) which comprises a 12S rRNA and about 30 distinct proteins.</text>
</comment>
<comment type="subcellular location">
    <subcellularLocation>
        <location evidence="1">Mitochondrion</location>
    </subcellularLocation>
</comment>
<comment type="similarity">
    <text evidence="3">Belongs to the universal ribosomal protein uS12 family.</text>
</comment>
<gene>
    <name type="primary">Mrps12</name>
    <name type="synonym">Rpms12</name>
</gene>
<name>RT12_MOUSE</name>
<sequence length="139" mass="15437">MSWPGLLYGLTTSLSRGLALAPQLWAARSMATLNQMHRLGPRKEPPKRLGPTEGRPQLKGVVLRTFIRKPKKPNSANRKCCRVRLSTGKEAVCFIPGEGHTLQEHHVVLVEGGRTQDLPGVKLKVVRGKYDCGHVQKKK</sequence>
<reference key="1">
    <citation type="journal article" date="1997" name="Gene">
        <title>Metazoan nuclear genes for mitoribosomal protein S12.</title>
        <authorList>
            <person name="Shah Z.H."/>
            <person name="O'Dell K.M."/>
            <person name="Miller S.C.M."/>
            <person name="An X."/>
            <person name="Jacobs H.T."/>
        </authorList>
    </citation>
    <scope>NUCLEOTIDE SEQUENCE [MRNA]</scope>
    <source>
        <strain>C57BL/6J</strain>
    </source>
</reference>
<reference key="2">
    <citation type="journal article" date="2004" name="Genome Res.">
        <title>The status, quality, and expansion of the NIH full-length cDNA project: the Mammalian Gene Collection (MGC).</title>
        <authorList>
            <consortium name="The MGC Project Team"/>
        </authorList>
    </citation>
    <scope>NUCLEOTIDE SEQUENCE [LARGE SCALE MRNA]</scope>
    <source>
        <strain>Czech II</strain>
        <strain>FVB/N</strain>
        <tissue>Colon</tissue>
        <tissue>Lung</tissue>
    </source>
</reference>
<protein>
    <recommendedName>
        <fullName evidence="3">Small ribosomal subunit protein uS12m</fullName>
    </recommendedName>
    <alternativeName>
        <fullName>28S ribosomal protein S12, mitochondrial</fullName>
        <shortName>MRP-S12</shortName>
        <shortName>S12mt</shortName>
    </alternativeName>
    <alternativeName>
        <fullName>MT-RPS12</fullName>
    </alternativeName>
</protein>
<proteinExistence type="evidence at protein level"/>
<evidence type="ECO:0000250" key="1">
    <source>
        <dbReference type="UniProtKB" id="O15235"/>
    </source>
</evidence>
<evidence type="ECO:0000255" key="2"/>
<evidence type="ECO:0000305" key="3"/>